<comment type="function">
    <text evidence="1">Catalyzes the attachment of glutamate to tRNA(Glu) in a two-step reaction: glutamate is first activated by ATP to form Glu-AMP and then transferred to the acceptor end of tRNA(Glu).</text>
</comment>
<comment type="catalytic activity">
    <reaction evidence="1">
        <text>tRNA(Glu) + L-glutamate + ATP = L-glutamyl-tRNA(Glu) + AMP + diphosphate</text>
        <dbReference type="Rhea" id="RHEA:23540"/>
        <dbReference type="Rhea" id="RHEA-COMP:9663"/>
        <dbReference type="Rhea" id="RHEA-COMP:9680"/>
        <dbReference type="ChEBI" id="CHEBI:29985"/>
        <dbReference type="ChEBI" id="CHEBI:30616"/>
        <dbReference type="ChEBI" id="CHEBI:33019"/>
        <dbReference type="ChEBI" id="CHEBI:78442"/>
        <dbReference type="ChEBI" id="CHEBI:78520"/>
        <dbReference type="ChEBI" id="CHEBI:456215"/>
        <dbReference type="EC" id="6.1.1.17"/>
    </reaction>
</comment>
<comment type="subunit">
    <text evidence="1">Monomer.</text>
</comment>
<comment type="subcellular location">
    <subcellularLocation>
        <location evidence="1">Cytoplasm</location>
    </subcellularLocation>
</comment>
<comment type="similarity">
    <text evidence="1">Belongs to the class-I aminoacyl-tRNA synthetase family. Glutamate--tRNA ligase type 1 subfamily.</text>
</comment>
<organism>
    <name type="scientific">Xanthobacter autotrophicus (strain ATCC BAA-1158 / Py2)</name>
    <dbReference type="NCBI Taxonomy" id="78245"/>
    <lineage>
        <taxon>Bacteria</taxon>
        <taxon>Pseudomonadati</taxon>
        <taxon>Pseudomonadota</taxon>
        <taxon>Alphaproteobacteria</taxon>
        <taxon>Hyphomicrobiales</taxon>
        <taxon>Xanthobacteraceae</taxon>
        <taxon>Xanthobacter</taxon>
    </lineage>
</organism>
<accession>A7IPJ5</accession>
<proteinExistence type="inferred from homology"/>
<feature type="chain" id="PRO_0000367796" description="Glutamate--tRNA ligase 2">
    <location>
        <begin position="1"/>
        <end position="458"/>
    </location>
</feature>
<feature type="short sequence motif" description="'HIGH' region" evidence="1">
    <location>
        <begin position="20"/>
        <end position="30"/>
    </location>
</feature>
<feature type="short sequence motif" description="'KMSKS' region" evidence="1">
    <location>
        <begin position="251"/>
        <end position="255"/>
    </location>
</feature>
<feature type="binding site" evidence="1">
    <location>
        <position position="254"/>
    </location>
    <ligand>
        <name>ATP</name>
        <dbReference type="ChEBI" id="CHEBI:30616"/>
    </ligand>
</feature>
<dbReference type="EC" id="6.1.1.17" evidence="1"/>
<dbReference type="EMBL" id="CP000781">
    <property type="protein sequence ID" value="ABS69941.1"/>
    <property type="molecule type" value="Genomic_DNA"/>
</dbReference>
<dbReference type="SMR" id="A7IPJ5"/>
<dbReference type="STRING" id="78245.Xaut_4722"/>
<dbReference type="KEGG" id="xau:Xaut_4722"/>
<dbReference type="eggNOG" id="COG0008">
    <property type="taxonomic scope" value="Bacteria"/>
</dbReference>
<dbReference type="eggNOG" id="COG1384">
    <property type="taxonomic scope" value="Bacteria"/>
</dbReference>
<dbReference type="HOGENOM" id="CLU_015768_6_1_5"/>
<dbReference type="OrthoDB" id="9807503at2"/>
<dbReference type="PhylomeDB" id="A7IPJ5"/>
<dbReference type="Proteomes" id="UP000002417">
    <property type="component" value="Chromosome"/>
</dbReference>
<dbReference type="GO" id="GO:0005737">
    <property type="term" value="C:cytoplasm"/>
    <property type="evidence" value="ECO:0007669"/>
    <property type="project" value="UniProtKB-SubCell"/>
</dbReference>
<dbReference type="GO" id="GO:0005524">
    <property type="term" value="F:ATP binding"/>
    <property type="evidence" value="ECO:0007669"/>
    <property type="project" value="UniProtKB-UniRule"/>
</dbReference>
<dbReference type="GO" id="GO:0004818">
    <property type="term" value="F:glutamate-tRNA ligase activity"/>
    <property type="evidence" value="ECO:0007669"/>
    <property type="project" value="UniProtKB-UniRule"/>
</dbReference>
<dbReference type="GO" id="GO:0000049">
    <property type="term" value="F:tRNA binding"/>
    <property type="evidence" value="ECO:0007669"/>
    <property type="project" value="InterPro"/>
</dbReference>
<dbReference type="GO" id="GO:0006424">
    <property type="term" value="P:glutamyl-tRNA aminoacylation"/>
    <property type="evidence" value="ECO:0007669"/>
    <property type="project" value="UniProtKB-UniRule"/>
</dbReference>
<dbReference type="Gene3D" id="1.10.10.350">
    <property type="match status" value="1"/>
</dbReference>
<dbReference type="Gene3D" id="3.40.50.620">
    <property type="entry name" value="HUPs"/>
    <property type="match status" value="1"/>
</dbReference>
<dbReference type="HAMAP" id="MF_00022">
    <property type="entry name" value="Glu_tRNA_synth_type1"/>
    <property type="match status" value="1"/>
</dbReference>
<dbReference type="InterPro" id="IPR045462">
    <property type="entry name" value="aa-tRNA-synth_I_cd-bd"/>
</dbReference>
<dbReference type="InterPro" id="IPR020751">
    <property type="entry name" value="aa-tRNA-synth_I_codon-bd_sub2"/>
</dbReference>
<dbReference type="InterPro" id="IPR001412">
    <property type="entry name" value="aa-tRNA-synth_I_CS"/>
</dbReference>
<dbReference type="InterPro" id="IPR008925">
    <property type="entry name" value="aa_tRNA-synth_I_cd-bd_sf"/>
</dbReference>
<dbReference type="InterPro" id="IPR004527">
    <property type="entry name" value="Glu-tRNA-ligase_bac/mito"/>
</dbReference>
<dbReference type="InterPro" id="IPR000924">
    <property type="entry name" value="Glu/Gln-tRNA-synth"/>
</dbReference>
<dbReference type="InterPro" id="IPR020058">
    <property type="entry name" value="Glu/Gln-tRNA-synth_Ib_cat-dom"/>
</dbReference>
<dbReference type="InterPro" id="IPR049940">
    <property type="entry name" value="GluQ/Sye"/>
</dbReference>
<dbReference type="InterPro" id="IPR014729">
    <property type="entry name" value="Rossmann-like_a/b/a_fold"/>
</dbReference>
<dbReference type="PANTHER" id="PTHR43311">
    <property type="entry name" value="GLUTAMATE--TRNA LIGASE"/>
    <property type="match status" value="1"/>
</dbReference>
<dbReference type="PANTHER" id="PTHR43311:SF2">
    <property type="entry name" value="GLUTAMATE--TRNA LIGASE, MITOCHONDRIAL-RELATED"/>
    <property type="match status" value="1"/>
</dbReference>
<dbReference type="Pfam" id="PF19269">
    <property type="entry name" value="Anticodon_2"/>
    <property type="match status" value="1"/>
</dbReference>
<dbReference type="Pfam" id="PF00749">
    <property type="entry name" value="tRNA-synt_1c"/>
    <property type="match status" value="1"/>
</dbReference>
<dbReference type="PRINTS" id="PR00987">
    <property type="entry name" value="TRNASYNTHGLU"/>
</dbReference>
<dbReference type="SUPFAM" id="SSF48163">
    <property type="entry name" value="An anticodon-binding domain of class I aminoacyl-tRNA synthetases"/>
    <property type="match status" value="1"/>
</dbReference>
<dbReference type="SUPFAM" id="SSF52374">
    <property type="entry name" value="Nucleotidylyl transferase"/>
    <property type="match status" value="1"/>
</dbReference>
<dbReference type="PROSITE" id="PS00178">
    <property type="entry name" value="AA_TRNA_LIGASE_I"/>
    <property type="match status" value="1"/>
</dbReference>
<reference key="1">
    <citation type="submission" date="2007-07" db="EMBL/GenBank/DDBJ databases">
        <title>Complete sequence of chromosome of Xanthobacter autotrophicus Py2.</title>
        <authorList>
            <consortium name="US DOE Joint Genome Institute"/>
            <person name="Copeland A."/>
            <person name="Lucas S."/>
            <person name="Lapidus A."/>
            <person name="Barry K."/>
            <person name="Glavina del Rio T."/>
            <person name="Hammon N."/>
            <person name="Israni S."/>
            <person name="Dalin E."/>
            <person name="Tice H."/>
            <person name="Pitluck S."/>
            <person name="Sims D."/>
            <person name="Brettin T."/>
            <person name="Bruce D."/>
            <person name="Detter J.C."/>
            <person name="Han C."/>
            <person name="Tapia R."/>
            <person name="Brainard J."/>
            <person name="Schmutz J."/>
            <person name="Larimer F."/>
            <person name="Land M."/>
            <person name="Hauser L."/>
            <person name="Kyrpides N."/>
            <person name="Kim E."/>
            <person name="Ensigns S.A."/>
            <person name="Richardson P."/>
        </authorList>
    </citation>
    <scope>NUCLEOTIDE SEQUENCE [LARGE SCALE GENOMIC DNA]</scope>
    <source>
        <strain>ATCC BAA-1158 / Py2</strain>
    </source>
</reference>
<gene>
    <name evidence="1" type="primary">gltX2</name>
    <name type="ordered locus">Xaut_4722</name>
</gene>
<name>SYE2_XANP2</name>
<evidence type="ECO:0000255" key="1">
    <source>
        <dbReference type="HAMAP-Rule" id="MF_00022"/>
    </source>
</evidence>
<protein>
    <recommendedName>
        <fullName evidence="1">Glutamate--tRNA ligase 2</fullName>
        <ecNumber evidence="1">6.1.1.17</ecNumber>
    </recommendedName>
    <alternativeName>
        <fullName evidence="1">Glutamyl-tRNA synthetase 2</fullName>
        <shortName evidence="1">GluRS 2</shortName>
    </alternativeName>
</protein>
<keyword id="KW-0030">Aminoacyl-tRNA synthetase</keyword>
<keyword id="KW-0067">ATP-binding</keyword>
<keyword id="KW-0963">Cytoplasm</keyword>
<keyword id="KW-0436">Ligase</keyword>
<keyword id="KW-0547">Nucleotide-binding</keyword>
<keyword id="KW-0648">Protein biosynthesis</keyword>
<keyword id="KW-1185">Reference proteome</keyword>
<sequence>MSRSTPSRSTPSRPVLRFAPSPTGLIHVGNARTALINALLARRAGGTFILRFDDTDAARSRAEYADAIATDLAWLGIPPDLTFRQSDRIGEYEAATQQLKASGRLYPAYESEDELELKRRLQRARSLPPVYDRAALALTAADRARLEAEGRRPHWRFRLDHRVVAWDDGVRGPQQVDTASLSDPVLVRADGSFLYTLPSVVDDLAMGVTDVVRGEDHVTNTAVQIEIFEALGGVAPRFAHHNLLTLPSGEGLSKRLGHLSLSALREAGQEALAVAAAAVLVGTSHAVEAVESLEALAGMVDLAHISRAPARFDPDDLAQLTARTLHMMPFEAAASRLAAAGIGGGVAFWLAVRGNLARFSEAADWWALVSQPAAGVVAESDRTFLGEAAALLPPEPWDGQTYANWIKAVKAASGQSGKALFHPLRLALTGLEKGPELAALLPLMGRERVAGRLGGGVA</sequence>